<reference key="1">
    <citation type="journal article" date="2007" name="Proc. Natl. Acad. Sci. U.S.A.">
        <title>Independent sorting-out of thousands of duplicated gene pairs in two yeast species descended from a whole-genome duplication.</title>
        <authorList>
            <person name="Scannell D.R."/>
            <person name="Frank A.C."/>
            <person name="Conant G.C."/>
            <person name="Byrne K.P."/>
            <person name="Woolfit M."/>
            <person name="Wolfe K.H."/>
        </authorList>
    </citation>
    <scope>NUCLEOTIDE SEQUENCE [LARGE SCALE GENOMIC DNA]</scope>
    <source>
        <strain>ATCC 22028 / DSM 70294 / BCRC 21397 / CBS 2163 / NBRC 10782 / NRRL Y-8283 / UCD 57-17</strain>
    </source>
</reference>
<protein>
    <recommendedName>
        <fullName>Enhancer of translation termination 1</fullName>
    </recommendedName>
</protein>
<keyword id="KW-0539">Nucleus</keyword>
<keyword id="KW-1185">Reference proteome</keyword>
<keyword id="KW-0804">Transcription</keyword>
<keyword id="KW-0805">Transcription regulation</keyword>
<keyword id="KW-0810">Translation regulation</keyword>
<accession>A7TQ03</accession>
<organism>
    <name type="scientific">Vanderwaltozyma polyspora (strain ATCC 22028 / DSM 70294 / BCRC 21397 / CBS 2163 / NBRC 10782 / NRRL Y-8283 / UCD 57-17)</name>
    <name type="common">Kluyveromyces polysporus</name>
    <dbReference type="NCBI Taxonomy" id="436907"/>
    <lineage>
        <taxon>Eukaryota</taxon>
        <taxon>Fungi</taxon>
        <taxon>Dikarya</taxon>
        <taxon>Ascomycota</taxon>
        <taxon>Saccharomycotina</taxon>
        <taxon>Saccharomycetes</taxon>
        <taxon>Saccharomycetales</taxon>
        <taxon>Saccharomycetaceae</taxon>
        <taxon>Vanderwaltozyma</taxon>
    </lineage>
</organism>
<name>ETT1_VANPO</name>
<evidence type="ECO:0000250" key="1"/>
<evidence type="ECO:0000256" key="2">
    <source>
        <dbReference type="SAM" id="MobiDB-lite"/>
    </source>
</evidence>
<evidence type="ECO:0000305" key="3"/>
<dbReference type="EMBL" id="DS480450">
    <property type="protein sequence ID" value="EDO15652.1"/>
    <property type="molecule type" value="Genomic_DNA"/>
</dbReference>
<dbReference type="RefSeq" id="XP_001643510.1">
    <property type="nucleotide sequence ID" value="XM_001643460.1"/>
</dbReference>
<dbReference type="SMR" id="A7TQ03"/>
<dbReference type="FunCoup" id="A7TQ03">
    <property type="interactions" value="127"/>
</dbReference>
<dbReference type="STRING" id="436907.A7TQ03"/>
<dbReference type="GeneID" id="5543743"/>
<dbReference type="KEGG" id="vpo:Kpol_473p11"/>
<dbReference type="eggNOG" id="ENOG502QPHX">
    <property type="taxonomic scope" value="Eukaryota"/>
</dbReference>
<dbReference type="HOGENOM" id="CLU_050427_0_0_1"/>
<dbReference type="InParanoid" id="A7TQ03"/>
<dbReference type="OMA" id="GIVHECD"/>
<dbReference type="OrthoDB" id="5598057at2759"/>
<dbReference type="PhylomeDB" id="A7TQ03"/>
<dbReference type="Proteomes" id="UP000000267">
    <property type="component" value="Unassembled WGS sequence"/>
</dbReference>
<dbReference type="GO" id="GO:0005634">
    <property type="term" value="C:nucleus"/>
    <property type="evidence" value="ECO:0007669"/>
    <property type="project" value="UniProtKB-SubCell"/>
</dbReference>
<dbReference type="GO" id="GO:2000640">
    <property type="term" value="P:positive regulation of SREBP signaling pathway"/>
    <property type="evidence" value="ECO:0007669"/>
    <property type="project" value="TreeGrafter"/>
</dbReference>
<dbReference type="GO" id="GO:0006417">
    <property type="term" value="P:regulation of translation"/>
    <property type="evidence" value="ECO:0007669"/>
    <property type="project" value="UniProtKB-KW"/>
</dbReference>
<dbReference type="GO" id="GO:0006415">
    <property type="term" value="P:translational termination"/>
    <property type="evidence" value="ECO:0007669"/>
    <property type="project" value="EnsemblFungi"/>
</dbReference>
<dbReference type="InterPro" id="IPR024318">
    <property type="entry name" value="Nro1/ETT1"/>
</dbReference>
<dbReference type="PANTHER" id="PTHR28290">
    <property type="entry name" value="ENHANCER OF TRANSLATION TERMINATION 1"/>
    <property type="match status" value="1"/>
</dbReference>
<dbReference type="PANTHER" id="PTHR28290:SF1">
    <property type="entry name" value="ENHANCER OF TRANSLATION TERMINATION 1"/>
    <property type="match status" value="1"/>
</dbReference>
<dbReference type="Pfam" id="PF12753">
    <property type="entry name" value="Nro1"/>
    <property type="match status" value="1"/>
</dbReference>
<gene>
    <name type="primary">ETT1</name>
    <name type="ORF">Kpol_473p11</name>
</gene>
<proteinExistence type="inferred from homology"/>
<feature type="chain" id="PRO_0000406623" description="Enhancer of translation termination 1">
    <location>
        <begin position="1"/>
        <end position="408"/>
    </location>
</feature>
<feature type="region of interest" description="Disordered" evidence="2">
    <location>
        <begin position="1"/>
        <end position="33"/>
    </location>
</feature>
<feature type="region of interest" description="Disordered" evidence="2">
    <location>
        <begin position="311"/>
        <end position="330"/>
    </location>
</feature>
<feature type="compositionally biased region" description="Acidic residues" evidence="2">
    <location>
        <begin position="311"/>
        <end position="321"/>
    </location>
</feature>
<sequence length="408" mass="46780">MAKRALGLGQKNREKKRKVESGSEGGSRNATPTVTNQIQIELGEGVDPDNELAQLHGLWLNYFKSERDDEYMLNGIVHECDRLIRQAQEDEEMAKQLNDRFHAIYALALSELTIFKAAEEEGKERKLVSEFFGNALDRLSYGQAAHPDSNLLKLVFAKILLQRIPLEYIFKLEVDSEEKLDLHQKLEDAKKNFVIVDSDLELSYEVLNMLNDLLDIVENFGHEDDIEEGLDSDDEDGIDLVELKTTHPLYQIQQQVPENYQWLRSSFDNLLESIKEKDSELFRSVARSIGELLLKEAEEPASTYLSIIYGNEDDDEDVEPTDESKEAQKKAQELTKKALEYLEKAQNEEDPKTWVQVAEAQIDLGNLLDYQSSEQESAYKKAEDILRKANKATKGKFQFILDNLLEKE</sequence>
<comment type="function">
    <text evidence="1">Required for correct translation termination and probably involved in regulation of hypoxic gene expression.</text>
</comment>
<comment type="subcellular location">
    <subcellularLocation>
        <location evidence="1">Nucleus</location>
    </subcellularLocation>
</comment>
<comment type="similarity">
    <text evidence="3">Belongs to the ETT1 family.</text>
</comment>